<dbReference type="EMBL" id="AE000520">
    <property type="protein sequence ID" value="AAC65279.1"/>
    <property type="molecule type" value="Genomic_DNA"/>
</dbReference>
<dbReference type="PIR" id="E71343">
    <property type="entry name" value="E71343"/>
</dbReference>
<dbReference type="RefSeq" id="WP_010881731.1">
    <property type="nucleotide sequence ID" value="NC_021490.2"/>
</dbReference>
<dbReference type="SMR" id="O83306"/>
<dbReference type="IntAct" id="O83306">
    <property type="interactions" value="7"/>
</dbReference>
<dbReference type="STRING" id="243276.TP_0282"/>
<dbReference type="EnsemblBacteria" id="AAC65279">
    <property type="protein sequence ID" value="AAC65279"/>
    <property type="gene ID" value="TP_0282"/>
</dbReference>
<dbReference type="KEGG" id="tpa:TP_0282"/>
<dbReference type="KEGG" id="tpw:TPANIC_0282"/>
<dbReference type="eggNOG" id="COG1729">
    <property type="taxonomic scope" value="Bacteria"/>
</dbReference>
<dbReference type="HOGENOM" id="CLU_105450_0_0_12"/>
<dbReference type="OrthoDB" id="359271at2"/>
<dbReference type="Proteomes" id="UP000000811">
    <property type="component" value="Chromosome"/>
</dbReference>
<dbReference type="GO" id="GO:0005886">
    <property type="term" value="C:plasma membrane"/>
    <property type="evidence" value="ECO:0007669"/>
    <property type="project" value="UniProtKB-SubCell"/>
</dbReference>
<dbReference type="Gene3D" id="1.25.40.10">
    <property type="entry name" value="Tetratricopeptide repeat domain"/>
    <property type="match status" value="1"/>
</dbReference>
<dbReference type="InterPro" id="IPR011990">
    <property type="entry name" value="TPR-like_helical_dom_sf"/>
</dbReference>
<dbReference type="SUPFAM" id="SSF48452">
    <property type="entry name" value="TPR-like"/>
    <property type="match status" value="1"/>
</dbReference>
<dbReference type="PROSITE" id="PS50293">
    <property type="entry name" value="TPR_REGION"/>
    <property type="match status" value="1"/>
</dbReference>
<name>Y282_TREPA</name>
<feature type="chain" id="PRO_0000106454" description="TPR repeat-containing protein TP_0282">
    <location>
        <begin position="1"/>
        <end position="239"/>
    </location>
</feature>
<feature type="transmembrane region" description="Helical" evidence="1">
    <location>
        <begin position="21"/>
        <end position="43"/>
    </location>
</feature>
<feature type="repeat" description="TPR 1">
    <location>
        <begin position="112"/>
        <end position="145"/>
    </location>
</feature>
<feature type="repeat" description="TPR 2">
    <location>
        <begin position="149"/>
        <end position="182"/>
    </location>
</feature>
<sequence length="239" mass="26435">MHEQRRGIVRVDRFLELHRRLLVGVLVAILGGLGLSAGCLLVMTRLRARASAEVTRIAREWDVLRKPDNTVSASGHEVEGRGGSSIRAKEDALLARLESCASSPWRDGFAYAYAQACVADIFFARKEWEKAQQAYVRAAYGARRSYVAGVYYFNAASCADERGRFEEARELYQRSARVQDFPLVPRALFNVGRMEEALGRAAAATAAYMQLYERFPLNGWAALGKSRAIAISVGGGRAQ</sequence>
<accession>O83306</accession>
<proteinExistence type="predicted"/>
<reference key="1">
    <citation type="journal article" date="1998" name="Science">
        <title>Complete genome sequence of Treponema pallidum, the syphilis spirochete.</title>
        <authorList>
            <person name="Fraser C.M."/>
            <person name="Norris S.J."/>
            <person name="Weinstock G.M."/>
            <person name="White O."/>
            <person name="Sutton G.G."/>
            <person name="Dodson R.J."/>
            <person name="Gwinn M.L."/>
            <person name="Hickey E.K."/>
            <person name="Clayton R.A."/>
            <person name="Ketchum K.A."/>
            <person name="Sodergren E."/>
            <person name="Hardham J.M."/>
            <person name="McLeod M.P."/>
            <person name="Salzberg S.L."/>
            <person name="Peterson J.D."/>
            <person name="Khalak H.G."/>
            <person name="Richardson D.L."/>
            <person name="Howell J.K."/>
            <person name="Chidambaram M."/>
            <person name="Utterback T.R."/>
            <person name="McDonald L.A."/>
            <person name="Artiach P."/>
            <person name="Bowman C."/>
            <person name="Cotton M.D."/>
            <person name="Fujii C."/>
            <person name="Garland S.A."/>
            <person name="Hatch B."/>
            <person name="Horst K."/>
            <person name="Roberts K.M."/>
            <person name="Sandusky M."/>
            <person name="Weidman J.F."/>
            <person name="Smith H.O."/>
            <person name="Venter J.C."/>
        </authorList>
    </citation>
    <scope>NUCLEOTIDE SEQUENCE [LARGE SCALE GENOMIC DNA]</scope>
    <source>
        <strain>Nichols</strain>
    </source>
</reference>
<gene>
    <name type="ordered locus">TP_0282</name>
</gene>
<protein>
    <recommendedName>
        <fullName>TPR repeat-containing protein TP_0282</fullName>
    </recommendedName>
</protein>
<comment type="subcellular location">
    <subcellularLocation>
        <location evidence="2">Cell membrane</location>
        <topology evidence="2">Single-pass membrane protein</topology>
    </subcellularLocation>
</comment>
<keyword id="KW-1003">Cell membrane</keyword>
<keyword id="KW-0472">Membrane</keyword>
<keyword id="KW-1185">Reference proteome</keyword>
<keyword id="KW-0677">Repeat</keyword>
<keyword id="KW-0802">TPR repeat</keyword>
<keyword id="KW-0812">Transmembrane</keyword>
<keyword id="KW-1133">Transmembrane helix</keyword>
<evidence type="ECO:0000255" key="1"/>
<evidence type="ECO:0000305" key="2"/>
<organism>
    <name type="scientific">Treponema pallidum (strain Nichols)</name>
    <dbReference type="NCBI Taxonomy" id="243276"/>
    <lineage>
        <taxon>Bacteria</taxon>
        <taxon>Pseudomonadati</taxon>
        <taxon>Spirochaetota</taxon>
        <taxon>Spirochaetia</taxon>
        <taxon>Spirochaetales</taxon>
        <taxon>Treponemataceae</taxon>
        <taxon>Treponema</taxon>
    </lineage>
</organism>